<accession>Q57557</accession>
<comment type="similarity">
    <text evidence="4">Belongs to the succinate dehydrogenase/fumarate reductase iron-sulfur protein family.</text>
</comment>
<evidence type="ECO:0000250" key="1"/>
<evidence type="ECO:0000255" key="2">
    <source>
        <dbReference type="PROSITE-ProRule" id="PRU00465"/>
    </source>
</evidence>
<evidence type="ECO:0000255" key="3">
    <source>
        <dbReference type="PROSITE-ProRule" id="PRU00711"/>
    </source>
</evidence>
<evidence type="ECO:0000305" key="4"/>
<protein>
    <recommendedName>
        <fullName>Uncharacterized iron-sulfur protein MJ0092</fullName>
    </recommendedName>
</protein>
<organism>
    <name type="scientific">Methanocaldococcus jannaschii (strain ATCC 43067 / DSM 2661 / JAL-1 / JCM 10045 / NBRC 100440)</name>
    <name type="common">Methanococcus jannaschii</name>
    <dbReference type="NCBI Taxonomy" id="243232"/>
    <lineage>
        <taxon>Archaea</taxon>
        <taxon>Methanobacteriati</taxon>
        <taxon>Methanobacteriota</taxon>
        <taxon>Methanomada group</taxon>
        <taxon>Methanococci</taxon>
        <taxon>Methanococcales</taxon>
        <taxon>Methanocaldococcaceae</taxon>
        <taxon>Methanocaldococcus</taxon>
    </lineage>
</organism>
<dbReference type="EMBL" id="L77117">
    <property type="protein sequence ID" value="AAB98073.1"/>
    <property type="molecule type" value="Genomic_DNA"/>
</dbReference>
<dbReference type="PIR" id="D64311">
    <property type="entry name" value="D64311"/>
</dbReference>
<dbReference type="RefSeq" id="WP_010869584.1">
    <property type="nucleotide sequence ID" value="NC_000909.1"/>
</dbReference>
<dbReference type="SMR" id="Q57557"/>
<dbReference type="FunCoup" id="Q57557">
    <property type="interactions" value="90"/>
</dbReference>
<dbReference type="STRING" id="243232.MJ_0092"/>
<dbReference type="PaxDb" id="243232-MJ_0092"/>
<dbReference type="DNASU" id="1450931"/>
<dbReference type="EnsemblBacteria" id="AAB98073">
    <property type="protein sequence ID" value="AAB98073"/>
    <property type="gene ID" value="MJ_0092"/>
</dbReference>
<dbReference type="GeneID" id="1450931"/>
<dbReference type="KEGG" id="mja:MJ_0092"/>
<dbReference type="eggNOG" id="arCOG00333">
    <property type="taxonomic scope" value="Archaea"/>
</dbReference>
<dbReference type="HOGENOM" id="CLU_023081_2_0_2"/>
<dbReference type="InParanoid" id="Q57557"/>
<dbReference type="OrthoDB" id="42878at2157"/>
<dbReference type="PhylomeDB" id="Q57557"/>
<dbReference type="Proteomes" id="UP000000805">
    <property type="component" value="Chromosome"/>
</dbReference>
<dbReference type="GO" id="GO:0005886">
    <property type="term" value="C:plasma membrane"/>
    <property type="evidence" value="ECO:0000318"/>
    <property type="project" value="GO_Central"/>
</dbReference>
<dbReference type="GO" id="GO:0051537">
    <property type="term" value="F:2 iron, 2 sulfur cluster binding"/>
    <property type="evidence" value="ECO:0007669"/>
    <property type="project" value="UniProtKB-KW"/>
</dbReference>
<dbReference type="GO" id="GO:0051539">
    <property type="term" value="F:4 iron, 4 sulfur cluster binding"/>
    <property type="evidence" value="ECO:0007669"/>
    <property type="project" value="UniProtKB-KW"/>
</dbReference>
<dbReference type="GO" id="GO:0009055">
    <property type="term" value="F:electron transfer activity"/>
    <property type="evidence" value="ECO:0007669"/>
    <property type="project" value="InterPro"/>
</dbReference>
<dbReference type="GO" id="GO:0046872">
    <property type="term" value="F:metal ion binding"/>
    <property type="evidence" value="ECO:0007669"/>
    <property type="project" value="UniProtKB-KW"/>
</dbReference>
<dbReference type="GO" id="GO:0016491">
    <property type="term" value="F:oxidoreductase activity"/>
    <property type="evidence" value="ECO:0007669"/>
    <property type="project" value="InterPro"/>
</dbReference>
<dbReference type="GO" id="GO:0006099">
    <property type="term" value="P:tricarboxylic acid cycle"/>
    <property type="evidence" value="ECO:0007669"/>
    <property type="project" value="InterPro"/>
</dbReference>
<dbReference type="CDD" id="cd00207">
    <property type="entry name" value="fer2"/>
    <property type="match status" value="1"/>
</dbReference>
<dbReference type="Gene3D" id="3.10.20.30">
    <property type="match status" value="1"/>
</dbReference>
<dbReference type="Gene3D" id="1.10.1060.10">
    <property type="entry name" value="Alpha-helical ferredoxin"/>
    <property type="match status" value="1"/>
</dbReference>
<dbReference type="InterPro" id="IPR036010">
    <property type="entry name" value="2Fe-2S_ferredoxin-like_sf"/>
</dbReference>
<dbReference type="InterPro" id="IPR001041">
    <property type="entry name" value="2Fe-2S_ferredoxin-type"/>
</dbReference>
<dbReference type="InterPro" id="IPR006058">
    <property type="entry name" value="2Fe2S_fd_BS"/>
</dbReference>
<dbReference type="InterPro" id="IPR017896">
    <property type="entry name" value="4Fe4S_Fe-S-bd"/>
</dbReference>
<dbReference type="InterPro" id="IPR017900">
    <property type="entry name" value="4Fe4S_Fe_S_CS"/>
</dbReference>
<dbReference type="InterPro" id="IPR012675">
    <property type="entry name" value="Beta-grasp_dom_sf"/>
</dbReference>
<dbReference type="InterPro" id="IPR004017">
    <property type="entry name" value="Cys_rich_dom"/>
</dbReference>
<dbReference type="InterPro" id="IPR009051">
    <property type="entry name" value="Helical_ferredxn"/>
</dbReference>
<dbReference type="InterPro" id="IPR004489">
    <property type="entry name" value="Succ_DH/fum_Rdtase_Fe-S"/>
</dbReference>
<dbReference type="InterPro" id="IPR025192">
    <property type="entry name" value="Succ_DH/fum_Rdtase_N"/>
</dbReference>
<dbReference type="NCBIfam" id="TIGR00384">
    <property type="entry name" value="dhsB"/>
    <property type="match status" value="1"/>
</dbReference>
<dbReference type="NCBIfam" id="NF004898">
    <property type="entry name" value="PRK06259.1"/>
    <property type="match status" value="1"/>
</dbReference>
<dbReference type="PANTHER" id="PTHR32479">
    <property type="entry name" value="GLYCOLATE OXIDASE IRON-SULFUR SUBUNIT"/>
    <property type="match status" value="1"/>
</dbReference>
<dbReference type="PANTHER" id="PTHR32479:SF17">
    <property type="entry name" value="GLYCOLATE OXIDASE IRON-SULFUR SUBUNIT"/>
    <property type="match status" value="1"/>
</dbReference>
<dbReference type="Pfam" id="PF02754">
    <property type="entry name" value="CCG"/>
    <property type="match status" value="2"/>
</dbReference>
<dbReference type="Pfam" id="PF13085">
    <property type="entry name" value="Fer2_3"/>
    <property type="match status" value="1"/>
</dbReference>
<dbReference type="Pfam" id="PF13183">
    <property type="entry name" value="Fer4_8"/>
    <property type="match status" value="1"/>
</dbReference>
<dbReference type="SUPFAM" id="SSF54292">
    <property type="entry name" value="2Fe-2S ferredoxin-like"/>
    <property type="match status" value="1"/>
</dbReference>
<dbReference type="SUPFAM" id="SSF46548">
    <property type="entry name" value="alpha-helical ferredoxin"/>
    <property type="match status" value="1"/>
</dbReference>
<dbReference type="PROSITE" id="PS00197">
    <property type="entry name" value="2FE2S_FER_1"/>
    <property type="match status" value="1"/>
</dbReference>
<dbReference type="PROSITE" id="PS51085">
    <property type="entry name" value="2FE2S_FER_2"/>
    <property type="match status" value="1"/>
</dbReference>
<dbReference type="PROSITE" id="PS00198">
    <property type="entry name" value="4FE4S_FER_1"/>
    <property type="match status" value="2"/>
</dbReference>
<dbReference type="PROSITE" id="PS51379">
    <property type="entry name" value="4FE4S_FER_2"/>
    <property type="match status" value="2"/>
</dbReference>
<reference key="1">
    <citation type="journal article" date="1996" name="Science">
        <title>Complete genome sequence of the methanogenic archaeon, Methanococcus jannaschii.</title>
        <authorList>
            <person name="Bult C.J."/>
            <person name="White O."/>
            <person name="Olsen G.J."/>
            <person name="Zhou L."/>
            <person name="Fleischmann R.D."/>
            <person name="Sutton G.G."/>
            <person name="Blake J.A."/>
            <person name="FitzGerald L.M."/>
            <person name="Clayton R.A."/>
            <person name="Gocayne J.D."/>
            <person name="Kerlavage A.R."/>
            <person name="Dougherty B.A."/>
            <person name="Tomb J.-F."/>
            <person name="Adams M.D."/>
            <person name="Reich C.I."/>
            <person name="Overbeek R."/>
            <person name="Kirkness E.F."/>
            <person name="Weinstock K.G."/>
            <person name="Merrick J.M."/>
            <person name="Glodek A."/>
            <person name="Scott J.L."/>
            <person name="Geoghagen N.S.M."/>
            <person name="Weidman J.F."/>
            <person name="Fuhrmann J.L."/>
            <person name="Nguyen D."/>
            <person name="Utterback T.R."/>
            <person name="Kelley J.M."/>
            <person name="Peterson J.D."/>
            <person name="Sadow P.W."/>
            <person name="Hanna M.C."/>
            <person name="Cotton M.D."/>
            <person name="Roberts K.M."/>
            <person name="Hurst M.A."/>
            <person name="Kaine B.P."/>
            <person name="Borodovsky M."/>
            <person name="Klenk H.-P."/>
            <person name="Fraser C.M."/>
            <person name="Smith H.O."/>
            <person name="Woese C.R."/>
            <person name="Venter J.C."/>
        </authorList>
    </citation>
    <scope>NUCLEOTIDE SEQUENCE [LARGE SCALE GENOMIC DNA]</scope>
    <source>
        <strain>ATCC 43067 / DSM 2661 / JAL-1 / JCM 10045 / NBRC 100440</strain>
    </source>
</reference>
<sequence>MIKITVKRFNGEKEYLESYEVPENITVLEALEYINKHYEANILFRASCRNAQCGSCAVTINGEPRLACETKVEDGMIIEPLRGFKVIRDLIVDREPYYKKLLGIKNYLIRKNYPEELEILIPKYVEENKELRGCIDCLSCLSVCPAREVSDYPGPTFMRQLARFAFDKRDEDGREITAYFENIYNCTTCAKCVEVCPKEIDIVHRAIEKLRALAFSKGYYIENHLKVRENVLKYNRSVVEEELPLLKQVADFYPAESEKLRVAFFTGCLVDFRLQNVGKDAIKVLNAHGVSVVIPKNQVCCGSPFFRTGQRDVAEMLKRKNLEIFNKLDVDCVVTICAGCGSTLKNDYKERKFEVKDITEVLTEVGLLKYKPLKMRITYHDPCHLRRGQKIYKQPREILKSIPELEFIDIEARCCGAGGGVRSGKPDIANLIGKSRARMIYDANVDAVITVCPFCEYHIRDSLKRFKEENKIDKEIDVMNIVSLLAKVI</sequence>
<gene>
    <name type="ordered locus">MJ0092</name>
</gene>
<feature type="chain" id="PRO_0000158709" description="Uncharacterized iron-sulfur protein MJ0092">
    <location>
        <begin position="1"/>
        <end position="489"/>
    </location>
</feature>
<feature type="domain" description="2Fe-2S ferredoxin-type" evidence="2">
    <location>
        <begin position="2"/>
        <end position="84"/>
    </location>
</feature>
<feature type="domain" description="4Fe-4S ferredoxin-type 1" evidence="3">
    <location>
        <begin position="123"/>
        <end position="155"/>
    </location>
</feature>
<feature type="domain" description="4Fe-4S ferredoxin-type 2" evidence="3">
    <location>
        <begin position="177"/>
        <end position="205"/>
    </location>
</feature>
<feature type="binding site" evidence="1">
    <location>
        <position position="48"/>
    </location>
    <ligand>
        <name>[2Fe-2S] cluster</name>
        <dbReference type="ChEBI" id="CHEBI:190135"/>
    </ligand>
</feature>
<feature type="binding site" evidence="1">
    <location>
        <position position="53"/>
    </location>
    <ligand>
        <name>[2Fe-2S] cluster</name>
        <dbReference type="ChEBI" id="CHEBI:190135"/>
    </ligand>
</feature>
<feature type="binding site" evidence="1">
    <location>
        <position position="56"/>
    </location>
    <ligand>
        <name>[2Fe-2S] cluster</name>
        <dbReference type="ChEBI" id="CHEBI:190135"/>
    </ligand>
</feature>
<feature type="binding site" evidence="1">
    <location>
        <position position="68"/>
    </location>
    <ligand>
        <name>[2Fe-2S] cluster</name>
        <dbReference type="ChEBI" id="CHEBI:190135"/>
    </ligand>
</feature>
<feature type="binding site" evidence="1">
    <location>
        <position position="134"/>
    </location>
    <ligand>
        <name>[4Fe-4S] cluster</name>
        <dbReference type="ChEBI" id="CHEBI:49883"/>
        <label>1</label>
    </ligand>
</feature>
<feature type="binding site" evidence="1">
    <location>
        <position position="137"/>
    </location>
    <ligand>
        <name>[4Fe-4S] cluster</name>
        <dbReference type="ChEBI" id="CHEBI:49883"/>
        <label>1</label>
    </ligand>
</feature>
<feature type="binding site" evidence="1">
    <location>
        <position position="140"/>
    </location>
    <ligand>
        <name>[4Fe-4S] cluster</name>
        <dbReference type="ChEBI" id="CHEBI:49883"/>
        <label>1</label>
    </ligand>
</feature>
<feature type="binding site" evidence="1">
    <location>
        <position position="144"/>
    </location>
    <ligand>
        <name>[4Fe-4S] cluster</name>
        <dbReference type="ChEBI" id="CHEBI:49883"/>
        <label>2</label>
    </ligand>
</feature>
<feature type="binding site" evidence="1">
    <location>
        <position position="186"/>
    </location>
    <ligand>
        <name>[4Fe-4S] cluster</name>
        <dbReference type="ChEBI" id="CHEBI:49883"/>
        <label>2</label>
    </ligand>
</feature>
<feature type="binding site" evidence="1">
    <location>
        <position position="189"/>
    </location>
    <ligand>
        <name>[4Fe-4S] cluster</name>
        <dbReference type="ChEBI" id="CHEBI:49883"/>
        <label>2</label>
    </ligand>
</feature>
<feature type="binding site" evidence="1">
    <location>
        <position position="192"/>
    </location>
    <ligand>
        <name>[4Fe-4S] cluster</name>
        <dbReference type="ChEBI" id="CHEBI:49883"/>
        <label>2</label>
    </ligand>
</feature>
<feature type="binding site" evidence="1">
    <location>
        <position position="196"/>
    </location>
    <ligand>
        <name>[4Fe-4S] cluster</name>
        <dbReference type="ChEBI" id="CHEBI:49883"/>
        <label>1</label>
    </ligand>
</feature>
<proteinExistence type="inferred from homology"/>
<name>Y092_METJA</name>
<keyword id="KW-0001">2Fe-2S</keyword>
<keyword id="KW-0004">4Fe-4S</keyword>
<keyword id="KW-0408">Iron</keyword>
<keyword id="KW-0411">Iron-sulfur</keyword>
<keyword id="KW-0479">Metal-binding</keyword>
<keyword id="KW-1185">Reference proteome</keyword>
<keyword id="KW-0677">Repeat</keyword>